<evidence type="ECO:0000255" key="1">
    <source>
        <dbReference type="HAMAP-Rule" id="MF_00321"/>
    </source>
</evidence>
<reference key="1">
    <citation type="journal article" date="2005" name="Genome Res.">
        <title>Genome sequence of Blochmannia pennsylvanicus indicates parallel evolutionary trends among bacterial mutualists of insects.</title>
        <authorList>
            <person name="Degnan P.H."/>
            <person name="Lazarus A.B."/>
            <person name="Wernegreen J.J."/>
        </authorList>
    </citation>
    <scope>NUCLEOTIDE SEQUENCE [LARGE SCALE GENOMIC DNA]</scope>
    <source>
        <strain>BPEN</strain>
    </source>
</reference>
<sequence length="199" mass="22940">MIHDYHITHFLISVPAVYCLPNEKIGMEVAFVGYSNSGKSSAINALTYQKKLTKVSKTPGCTQLINLFEVSPGIRLIDFPGYGYAKKTKKRKNYWHDVICEYLKKRKNLKGLILMMDIRHPIKDLDQKTIESALSVDVPVFTLLSKSDKISRNILQVTSKKIIHDMKMMFETHIQVEPFSVVKKYGIHSLKRVLNNWLR</sequence>
<feature type="chain" id="PRO_0000266825" description="Probable GTP-binding protein EngB">
    <location>
        <begin position="1"/>
        <end position="199"/>
    </location>
</feature>
<feature type="domain" description="EngB-type G" evidence="1">
    <location>
        <begin position="25"/>
        <end position="199"/>
    </location>
</feature>
<feature type="binding site" evidence="1">
    <location>
        <position position="40"/>
    </location>
    <ligand>
        <name>Mg(2+)</name>
        <dbReference type="ChEBI" id="CHEBI:18420"/>
    </ligand>
</feature>
<feature type="binding site" evidence="1">
    <location>
        <position position="62"/>
    </location>
    <ligand>
        <name>Mg(2+)</name>
        <dbReference type="ChEBI" id="CHEBI:18420"/>
    </ligand>
</feature>
<gene>
    <name evidence="1" type="primary">engB</name>
    <name type="ordered locus">BPEN_644</name>
</gene>
<comment type="function">
    <text evidence="1">Necessary for normal cell division and for the maintenance of normal septation.</text>
</comment>
<comment type="cofactor">
    <cofactor evidence="1">
        <name>Mg(2+)</name>
        <dbReference type="ChEBI" id="CHEBI:18420"/>
    </cofactor>
</comment>
<comment type="similarity">
    <text evidence="1">Belongs to the TRAFAC class TrmE-Era-EngA-EngB-Septin-like GTPase superfamily. EngB GTPase family.</text>
</comment>
<keyword id="KW-0131">Cell cycle</keyword>
<keyword id="KW-0132">Cell division</keyword>
<keyword id="KW-0342">GTP-binding</keyword>
<keyword id="KW-0460">Magnesium</keyword>
<keyword id="KW-0479">Metal-binding</keyword>
<keyword id="KW-0547">Nucleotide-binding</keyword>
<keyword id="KW-1185">Reference proteome</keyword>
<keyword id="KW-0717">Septation</keyword>
<protein>
    <recommendedName>
        <fullName evidence="1">Probable GTP-binding protein EngB</fullName>
    </recommendedName>
</protein>
<organism>
    <name type="scientific">Blochmanniella pennsylvanica (strain BPEN)</name>
    <dbReference type="NCBI Taxonomy" id="291272"/>
    <lineage>
        <taxon>Bacteria</taxon>
        <taxon>Pseudomonadati</taxon>
        <taxon>Pseudomonadota</taxon>
        <taxon>Gammaproteobacteria</taxon>
        <taxon>Enterobacterales</taxon>
        <taxon>Enterobacteriaceae</taxon>
        <taxon>ant endosymbionts</taxon>
        <taxon>Candidatus Blochmanniella</taxon>
    </lineage>
</organism>
<accession>Q491W2</accession>
<name>ENGB_BLOPB</name>
<dbReference type="EMBL" id="CP000016">
    <property type="protein sequence ID" value="AAZ41242.1"/>
    <property type="molecule type" value="Genomic_DNA"/>
</dbReference>
<dbReference type="SMR" id="Q491W2"/>
<dbReference type="STRING" id="291272.BPEN_644"/>
<dbReference type="KEGG" id="bpn:BPEN_644"/>
<dbReference type="eggNOG" id="COG0218">
    <property type="taxonomic scope" value="Bacteria"/>
</dbReference>
<dbReference type="HOGENOM" id="CLU_033732_1_0_6"/>
<dbReference type="OrthoDB" id="9804921at2"/>
<dbReference type="Proteomes" id="UP000007794">
    <property type="component" value="Chromosome"/>
</dbReference>
<dbReference type="GO" id="GO:0005829">
    <property type="term" value="C:cytosol"/>
    <property type="evidence" value="ECO:0007669"/>
    <property type="project" value="TreeGrafter"/>
</dbReference>
<dbReference type="GO" id="GO:0005525">
    <property type="term" value="F:GTP binding"/>
    <property type="evidence" value="ECO:0007669"/>
    <property type="project" value="UniProtKB-UniRule"/>
</dbReference>
<dbReference type="GO" id="GO:0046872">
    <property type="term" value="F:metal ion binding"/>
    <property type="evidence" value="ECO:0007669"/>
    <property type="project" value="UniProtKB-KW"/>
</dbReference>
<dbReference type="GO" id="GO:0000917">
    <property type="term" value="P:division septum assembly"/>
    <property type="evidence" value="ECO:0007669"/>
    <property type="project" value="UniProtKB-KW"/>
</dbReference>
<dbReference type="CDD" id="cd01876">
    <property type="entry name" value="YihA_EngB"/>
    <property type="match status" value="1"/>
</dbReference>
<dbReference type="Gene3D" id="3.40.50.300">
    <property type="entry name" value="P-loop containing nucleotide triphosphate hydrolases"/>
    <property type="match status" value="1"/>
</dbReference>
<dbReference type="HAMAP" id="MF_00321">
    <property type="entry name" value="GTPase_EngB"/>
    <property type="match status" value="1"/>
</dbReference>
<dbReference type="InterPro" id="IPR030393">
    <property type="entry name" value="G_ENGB_dom"/>
</dbReference>
<dbReference type="InterPro" id="IPR006073">
    <property type="entry name" value="GTP-bd"/>
</dbReference>
<dbReference type="InterPro" id="IPR019987">
    <property type="entry name" value="GTP-bd_ribosome_bio_YsxC"/>
</dbReference>
<dbReference type="InterPro" id="IPR027417">
    <property type="entry name" value="P-loop_NTPase"/>
</dbReference>
<dbReference type="NCBIfam" id="TIGR03598">
    <property type="entry name" value="GTPase_YsxC"/>
    <property type="match status" value="1"/>
</dbReference>
<dbReference type="PANTHER" id="PTHR11649:SF13">
    <property type="entry name" value="ENGB-TYPE G DOMAIN-CONTAINING PROTEIN"/>
    <property type="match status" value="1"/>
</dbReference>
<dbReference type="PANTHER" id="PTHR11649">
    <property type="entry name" value="MSS1/TRME-RELATED GTP-BINDING PROTEIN"/>
    <property type="match status" value="1"/>
</dbReference>
<dbReference type="Pfam" id="PF01926">
    <property type="entry name" value="MMR_HSR1"/>
    <property type="match status" value="1"/>
</dbReference>
<dbReference type="SUPFAM" id="SSF52540">
    <property type="entry name" value="P-loop containing nucleoside triphosphate hydrolases"/>
    <property type="match status" value="1"/>
</dbReference>
<dbReference type="PROSITE" id="PS51706">
    <property type="entry name" value="G_ENGB"/>
    <property type="match status" value="1"/>
</dbReference>
<proteinExistence type="inferred from homology"/>